<dbReference type="EMBL" id="BC121934">
    <property type="protein sequence ID" value="AAI21935.1"/>
    <property type="molecule type" value="mRNA"/>
</dbReference>
<dbReference type="RefSeq" id="NP_001072501.1">
    <property type="nucleotide sequence ID" value="NM_001079033.1"/>
</dbReference>
<dbReference type="RefSeq" id="XP_012820846.1">
    <property type="nucleotide sequence ID" value="XM_012965392.3"/>
</dbReference>
<dbReference type="SMR" id="Q0P4R6"/>
<dbReference type="FunCoup" id="Q0P4R6">
    <property type="interactions" value="363"/>
</dbReference>
<dbReference type="STRING" id="8364.ENSXETP00000019724"/>
<dbReference type="PaxDb" id="8364-ENSXETP00000050765"/>
<dbReference type="DNASU" id="779956"/>
<dbReference type="GeneID" id="779956"/>
<dbReference type="KEGG" id="xtr:779956"/>
<dbReference type="AGR" id="Xenbase:XB-GENE-1011216"/>
<dbReference type="CTD" id="166863"/>
<dbReference type="Xenbase" id="XB-GENE-1011216">
    <property type="gene designation" value="rbm46"/>
</dbReference>
<dbReference type="eggNOG" id="KOG0117">
    <property type="taxonomic scope" value="Eukaryota"/>
</dbReference>
<dbReference type="InParanoid" id="Q0P4R6"/>
<dbReference type="OMA" id="STVWHEG"/>
<dbReference type="OrthoDB" id="3800936at2759"/>
<dbReference type="Proteomes" id="UP000008143">
    <property type="component" value="Chromosome 1"/>
</dbReference>
<dbReference type="Bgee" id="ENSXETG00000032344">
    <property type="expression patterns" value="Expressed in testis and 3 other cell types or tissues"/>
</dbReference>
<dbReference type="ExpressionAtlas" id="Q0P4R6">
    <property type="expression patterns" value="baseline"/>
</dbReference>
<dbReference type="GO" id="GO:0005737">
    <property type="term" value="C:cytoplasm"/>
    <property type="evidence" value="ECO:0000250"/>
    <property type="project" value="UniProtKB"/>
</dbReference>
<dbReference type="GO" id="GO:0003723">
    <property type="term" value="F:RNA binding"/>
    <property type="evidence" value="ECO:0007669"/>
    <property type="project" value="UniProtKB-KW"/>
</dbReference>
<dbReference type="GO" id="GO:0051321">
    <property type="term" value="P:meiotic cell cycle"/>
    <property type="evidence" value="ECO:0007669"/>
    <property type="project" value="UniProtKB-KW"/>
</dbReference>
<dbReference type="GO" id="GO:0048477">
    <property type="term" value="P:oogenesis"/>
    <property type="evidence" value="ECO:0007669"/>
    <property type="project" value="UniProtKB-KW"/>
</dbReference>
<dbReference type="GO" id="GO:0007283">
    <property type="term" value="P:spermatogenesis"/>
    <property type="evidence" value="ECO:0007669"/>
    <property type="project" value="UniProtKB-KW"/>
</dbReference>
<dbReference type="CDD" id="cd19901">
    <property type="entry name" value="DSRM_RBM46"/>
    <property type="match status" value="1"/>
</dbReference>
<dbReference type="CDD" id="cd12492">
    <property type="entry name" value="RRM2_RBM46"/>
    <property type="match status" value="1"/>
</dbReference>
<dbReference type="FunFam" id="3.30.70.330:FF:000022">
    <property type="entry name" value="APOBEC1 complementation factor isoform X1"/>
    <property type="match status" value="1"/>
</dbReference>
<dbReference type="FunFam" id="3.30.70.330:FF:000026">
    <property type="entry name" value="APOBEC1 complementation factor isoform X1"/>
    <property type="match status" value="1"/>
</dbReference>
<dbReference type="FunFam" id="3.30.70.330:FF:000168">
    <property type="entry name" value="RNA binding motif protein 46"/>
    <property type="match status" value="1"/>
</dbReference>
<dbReference type="Gene3D" id="3.30.70.330">
    <property type="match status" value="3"/>
</dbReference>
<dbReference type="InterPro" id="IPR006535">
    <property type="entry name" value="HnRNP_R/Q_splicing_fac"/>
</dbReference>
<dbReference type="InterPro" id="IPR012677">
    <property type="entry name" value="Nucleotide-bd_a/b_plait_sf"/>
</dbReference>
<dbReference type="InterPro" id="IPR035979">
    <property type="entry name" value="RBD_domain_sf"/>
</dbReference>
<dbReference type="InterPro" id="IPR044462">
    <property type="entry name" value="RBM46_DSR"/>
</dbReference>
<dbReference type="InterPro" id="IPR034435">
    <property type="entry name" value="RBM46_RRM2"/>
</dbReference>
<dbReference type="InterPro" id="IPR000504">
    <property type="entry name" value="RRM_dom"/>
</dbReference>
<dbReference type="NCBIfam" id="TIGR01648">
    <property type="entry name" value="hnRNP-R-Q"/>
    <property type="match status" value="1"/>
</dbReference>
<dbReference type="PANTHER" id="PTHR21245">
    <property type="entry name" value="HETEROGENEOUS NUCLEAR RIBONUCLEOPROTEIN"/>
    <property type="match status" value="1"/>
</dbReference>
<dbReference type="Pfam" id="PF14709">
    <property type="entry name" value="DND1_DSRM"/>
    <property type="match status" value="1"/>
</dbReference>
<dbReference type="Pfam" id="PF00076">
    <property type="entry name" value="RRM_1"/>
    <property type="match status" value="3"/>
</dbReference>
<dbReference type="SMART" id="SM00360">
    <property type="entry name" value="RRM"/>
    <property type="match status" value="3"/>
</dbReference>
<dbReference type="SUPFAM" id="SSF54928">
    <property type="entry name" value="RNA-binding domain, RBD"/>
    <property type="match status" value="3"/>
</dbReference>
<dbReference type="PROSITE" id="PS50102">
    <property type="entry name" value="RRM"/>
    <property type="match status" value="3"/>
</dbReference>
<comment type="function">
    <text evidence="2">Essential for male and female fertility, playing a crucial role in regulating germ cell development by ensuring the proper progression of meiosis prophase I.</text>
</comment>
<comment type="subcellular location">
    <subcellularLocation>
        <location evidence="1">Cytoplasm</location>
    </subcellularLocation>
</comment>
<organism>
    <name type="scientific">Xenopus tropicalis</name>
    <name type="common">Western clawed frog</name>
    <name type="synonym">Silurana tropicalis</name>
    <dbReference type="NCBI Taxonomy" id="8364"/>
    <lineage>
        <taxon>Eukaryota</taxon>
        <taxon>Metazoa</taxon>
        <taxon>Chordata</taxon>
        <taxon>Craniata</taxon>
        <taxon>Vertebrata</taxon>
        <taxon>Euteleostomi</taxon>
        <taxon>Amphibia</taxon>
        <taxon>Batrachia</taxon>
        <taxon>Anura</taxon>
        <taxon>Pipoidea</taxon>
        <taxon>Pipidae</taxon>
        <taxon>Xenopodinae</taxon>
        <taxon>Xenopus</taxon>
        <taxon>Silurana</taxon>
    </lineage>
</organism>
<sequence>MEDNCTDMFNGCSKFDISIQTQVALLALIDNTGYTMVQVNGQRKFGGPPPGWEGPPPPRGCEVFVGKIPRDMYEDKLVPLFARAGKIYEFRLMMEFSGENRGYAFVMYTNKEEALLAIRMLNNYEICQGKFIGVCVSLDNCRLFIGSIPQEKRKEEILEEMKKVTEGVMDVIVYPSATDKTKNRGFAFVMYESHRAAAMARRKLIPGPFQLWGHTIKVAWASPEKEVDEETMQKVKVLYVRNLMMSTTEETIKAEFNRYKPGVVERVKKIRDYAFVHFFRRDYAIAAMSVMNGRLIDGARIEVTLAKPVNKEAAWRQNGNGHMNANSECLLNFANKEGSQKALDMCSNVPAYLNNPNSPTFLEPETCTYPCIPGTKLTPINLYSLKIHHFHSAVMHLEYFCYKNNWSFPEYYLYSTTGQDGKMLLAYKVILPAITGNTNSYFMPDKLCSFVEDAKELAAQFTLMHLDYSYHPTSGKNISLPSTAATSGTSGVLPYTPKPYSYSSYPSSPNVSLTNGGSVGKQLYVSNQASYFSG</sequence>
<protein>
    <recommendedName>
        <fullName>Probable RNA-binding protein 46</fullName>
    </recommendedName>
    <alternativeName>
        <fullName>RNA-binding motif protein 46</fullName>
    </alternativeName>
</protein>
<reference key="1">
    <citation type="submission" date="2006-08" db="EMBL/GenBank/DDBJ databases">
        <authorList>
            <consortium name="NIH - Xenopus Gene Collection (XGC) project"/>
        </authorList>
    </citation>
    <scope>NUCLEOTIDE SEQUENCE [LARGE SCALE MRNA]</scope>
    <source>
        <tissue>Testis</tissue>
    </source>
</reference>
<feature type="chain" id="PRO_0000305318" description="Probable RNA-binding protein 46">
    <location>
        <begin position="1"/>
        <end position="534"/>
    </location>
</feature>
<feature type="domain" description="RRM 1" evidence="3">
    <location>
        <begin position="61"/>
        <end position="139"/>
    </location>
</feature>
<feature type="domain" description="RRM 2" evidence="3">
    <location>
        <begin position="141"/>
        <end position="223"/>
    </location>
</feature>
<feature type="domain" description="RRM 3" evidence="3">
    <location>
        <begin position="236"/>
        <end position="308"/>
    </location>
</feature>
<keyword id="KW-0963">Cytoplasm</keyword>
<keyword id="KW-0221">Differentiation</keyword>
<keyword id="KW-0469">Meiosis</keyword>
<keyword id="KW-0896">Oogenesis</keyword>
<keyword id="KW-1185">Reference proteome</keyword>
<keyword id="KW-0677">Repeat</keyword>
<keyword id="KW-0694">RNA-binding</keyword>
<keyword id="KW-0744">Spermatogenesis</keyword>
<accession>Q0P4R6</accession>
<name>RBM46_XENTR</name>
<proteinExistence type="evidence at transcript level"/>
<gene>
    <name type="primary">rbm46</name>
</gene>
<evidence type="ECO:0000250" key="1">
    <source>
        <dbReference type="UniProtKB" id="P86049"/>
    </source>
</evidence>
<evidence type="ECO:0000250" key="2">
    <source>
        <dbReference type="UniProtKB" id="Q08BH5"/>
    </source>
</evidence>
<evidence type="ECO:0000255" key="3">
    <source>
        <dbReference type="PROSITE-ProRule" id="PRU00176"/>
    </source>
</evidence>